<dbReference type="EC" id="6.1.1.21" evidence="1"/>
<dbReference type="EMBL" id="CP000936">
    <property type="protein sequence ID" value="ACA35571.1"/>
    <property type="molecule type" value="Genomic_DNA"/>
</dbReference>
<dbReference type="RefSeq" id="WP_000775876.1">
    <property type="nucleotide sequence ID" value="NC_010380.1"/>
</dbReference>
<dbReference type="SMR" id="B1I9T7"/>
<dbReference type="KEGG" id="spv:SPH_2312"/>
<dbReference type="HOGENOM" id="CLU_025113_1_1_9"/>
<dbReference type="Proteomes" id="UP000002163">
    <property type="component" value="Chromosome"/>
</dbReference>
<dbReference type="GO" id="GO:0005737">
    <property type="term" value="C:cytoplasm"/>
    <property type="evidence" value="ECO:0007669"/>
    <property type="project" value="UniProtKB-SubCell"/>
</dbReference>
<dbReference type="GO" id="GO:0005524">
    <property type="term" value="F:ATP binding"/>
    <property type="evidence" value="ECO:0007669"/>
    <property type="project" value="UniProtKB-UniRule"/>
</dbReference>
<dbReference type="GO" id="GO:0140096">
    <property type="term" value="F:catalytic activity, acting on a protein"/>
    <property type="evidence" value="ECO:0007669"/>
    <property type="project" value="UniProtKB-ARBA"/>
</dbReference>
<dbReference type="GO" id="GO:0004821">
    <property type="term" value="F:histidine-tRNA ligase activity"/>
    <property type="evidence" value="ECO:0007669"/>
    <property type="project" value="UniProtKB-UniRule"/>
</dbReference>
<dbReference type="GO" id="GO:0016740">
    <property type="term" value="F:transferase activity"/>
    <property type="evidence" value="ECO:0007669"/>
    <property type="project" value="UniProtKB-ARBA"/>
</dbReference>
<dbReference type="GO" id="GO:0006427">
    <property type="term" value="P:histidyl-tRNA aminoacylation"/>
    <property type="evidence" value="ECO:0007669"/>
    <property type="project" value="UniProtKB-UniRule"/>
</dbReference>
<dbReference type="CDD" id="cd00773">
    <property type="entry name" value="HisRS-like_core"/>
    <property type="match status" value="1"/>
</dbReference>
<dbReference type="CDD" id="cd00859">
    <property type="entry name" value="HisRS_anticodon"/>
    <property type="match status" value="1"/>
</dbReference>
<dbReference type="FunFam" id="3.30.930.10:FF:000005">
    <property type="entry name" value="Histidine--tRNA ligase"/>
    <property type="match status" value="1"/>
</dbReference>
<dbReference type="Gene3D" id="3.40.50.800">
    <property type="entry name" value="Anticodon-binding domain"/>
    <property type="match status" value="1"/>
</dbReference>
<dbReference type="Gene3D" id="3.30.930.10">
    <property type="entry name" value="Bira Bifunctional Protein, Domain 2"/>
    <property type="match status" value="1"/>
</dbReference>
<dbReference type="HAMAP" id="MF_00127">
    <property type="entry name" value="His_tRNA_synth"/>
    <property type="match status" value="1"/>
</dbReference>
<dbReference type="InterPro" id="IPR006195">
    <property type="entry name" value="aa-tRNA-synth_II"/>
</dbReference>
<dbReference type="InterPro" id="IPR045864">
    <property type="entry name" value="aa-tRNA-synth_II/BPL/LPL"/>
</dbReference>
<dbReference type="InterPro" id="IPR004154">
    <property type="entry name" value="Anticodon-bd"/>
</dbReference>
<dbReference type="InterPro" id="IPR036621">
    <property type="entry name" value="Anticodon-bd_dom_sf"/>
</dbReference>
<dbReference type="InterPro" id="IPR015807">
    <property type="entry name" value="His-tRNA-ligase"/>
</dbReference>
<dbReference type="InterPro" id="IPR041715">
    <property type="entry name" value="HisRS-like_core"/>
</dbReference>
<dbReference type="InterPro" id="IPR004516">
    <property type="entry name" value="HisRS/HisZ"/>
</dbReference>
<dbReference type="InterPro" id="IPR033656">
    <property type="entry name" value="HisRS_anticodon"/>
</dbReference>
<dbReference type="NCBIfam" id="TIGR00442">
    <property type="entry name" value="hisS"/>
    <property type="match status" value="1"/>
</dbReference>
<dbReference type="PANTHER" id="PTHR43707:SF1">
    <property type="entry name" value="HISTIDINE--TRNA LIGASE, MITOCHONDRIAL-RELATED"/>
    <property type="match status" value="1"/>
</dbReference>
<dbReference type="PANTHER" id="PTHR43707">
    <property type="entry name" value="HISTIDYL-TRNA SYNTHETASE"/>
    <property type="match status" value="1"/>
</dbReference>
<dbReference type="Pfam" id="PF03129">
    <property type="entry name" value="HGTP_anticodon"/>
    <property type="match status" value="1"/>
</dbReference>
<dbReference type="Pfam" id="PF13393">
    <property type="entry name" value="tRNA-synt_His"/>
    <property type="match status" value="1"/>
</dbReference>
<dbReference type="PIRSF" id="PIRSF001549">
    <property type="entry name" value="His-tRNA_synth"/>
    <property type="match status" value="1"/>
</dbReference>
<dbReference type="SUPFAM" id="SSF52954">
    <property type="entry name" value="Class II aaRS ABD-related"/>
    <property type="match status" value="1"/>
</dbReference>
<dbReference type="SUPFAM" id="SSF55681">
    <property type="entry name" value="Class II aaRS and biotin synthetases"/>
    <property type="match status" value="1"/>
</dbReference>
<dbReference type="PROSITE" id="PS50862">
    <property type="entry name" value="AA_TRNA_LIGASE_II"/>
    <property type="match status" value="1"/>
</dbReference>
<organism>
    <name type="scientific">Streptococcus pneumoniae (strain Hungary19A-6)</name>
    <dbReference type="NCBI Taxonomy" id="487214"/>
    <lineage>
        <taxon>Bacteria</taxon>
        <taxon>Bacillati</taxon>
        <taxon>Bacillota</taxon>
        <taxon>Bacilli</taxon>
        <taxon>Lactobacillales</taxon>
        <taxon>Streptococcaceae</taxon>
        <taxon>Streptococcus</taxon>
    </lineage>
</organism>
<keyword id="KW-0030">Aminoacyl-tRNA synthetase</keyword>
<keyword id="KW-0067">ATP-binding</keyword>
<keyword id="KW-0963">Cytoplasm</keyword>
<keyword id="KW-0436">Ligase</keyword>
<keyword id="KW-0547">Nucleotide-binding</keyword>
<keyword id="KW-0648">Protein biosynthesis</keyword>
<proteinExistence type="inferred from homology"/>
<protein>
    <recommendedName>
        <fullName evidence="1">Histidine--tRNA ligase</fullName>
        <ecNumber evidence="1">6.1.1.21</ecNumber>
    </recommendedName>
    <alternativeName>
        <fullName evidence="1">Histidyl-tRNA synthetase</fullName>
        <shortName evidence="1">HisRS</shortName>
    </alternativeName>
</protein>
<gene>
    <name evidence="1" type="primary">hisS</name>
    <name type="ordered locus">SPH_2312</name>
</gene>
<comment type="catalytic activity">
    <reaction evidence="1">
        <text>tRNA(His) + L-histidine + ATP = L-histidyl-tRNA(His) + AMP + diphosphate + H(+)</text>
        <dbReference type="Rhea" id="RHEA:17313"/>
        <dbReference type="Rhea" id="RHEA-COMP:9665"/>
        <dbReference type="Rhea" id="RHEA-COMP:9689"/>
        <dbReference type="ChEBI" id="CHEBI:15378"/>
        <dbReference type="ChEBI" id="CHEBI:30616"/>
        <dbReference type="ChEBI" id="CHEBI:33019"/>
        <dbReference type="ChEBI" id="CHEBI:57595"/>
        <dbReference type="ChEBI" id="CHEBI:78442"/>
        <dbReference type="ChEBI" id="CHEBI:78527"/>
        <dbReference type="ChEBI" id="CHEBI:456215"/>
        <dbReference type="EC" id="6.1.1.21"/>
    </reaction>
</comment>
<comment type="subunit">
    <text evidence="1">Homodimer.</text>
</comment>
<comment type="subcellular location">
    <subcellularLocation>
        <location evidence="1">Cytoplasm</location>
    </subcellularLocation>
</comment>
<comment type="similarity">
    <text evidence="1">Belongs to the class-II aminoacyl-tRNA synthetase family.</text>
</comment>
<reference key="1">
    <citation type="journal article" date="2010" name="Genome Biol.">
        <title>Structure and dynamics of the pan-genome of Streptococcus pneumoniae and closely related species.</title>
        <authorList>
            <person name="Donati C."/>
            <person name="Hiller N.L."/>
            <person name="Tettelin H."/>
            <person name="Muzzi A."/>
            <person name="Croucher N.J."/>
            <person name="Angiuoli S.V."/>
            <person name="Oggioni M."/>
            <person name="Dunning Hotopp J.C."/>
            <person name="Hu F.Z."/>
            <person name="Riley D.R."/>
            <person name="Covacci A."/>
            <person name="Mitchell T.J."/>
            <person name="Bentley S.D."/>
            <person name="Kilian M."/>
            <person name="Ehrlich G.D."/>
            <person name="Rappuoli R."/>
            <person name="Moxon E.R."/>
            <person name="Masignani V."/>
        </authorList>
    </citation>
    <scope>NUCLEOTIDE SEQUENCE [LARGE SCALE GENOMIC DNA]</scope>
    <source>
        <strain>Hungary19A-6</strain>
    </source>
</reference>
<feature type="chain" id="PRO_1000095600" description="Histidine--tRNA ligase">
    <location>
        <begin position="1"/>
        <end position="429"/>
    </location>
</feature>
<sequence>MKLQKPKGTQDILPAESAKWQYVEGFAREIFKRYNYAEVRTPIFEHYEVISRSVGDTTDIVTKEMYDFYDKGDRHITLRPEGTAPVVRSYVENKLFAPEVQKPSKFYYMGPMFRYERPQAGRLRQFHQIGVECFGSSNPATDVETIAMAAHFLKEIGIQGVKLHLNTLGNPESRAAYRQALIDYLTPLKETLSKDSQRRLEENPLRVLDSKEKEDKVAVENAPSILDFLDEESQTHFDAVRQMLENLGVDYIIDTNMVRGLDYYNHTIFEFITEIEGNDLTVCAGGRYDGLVAYFGGPETAGFGFGLGVERLLLILEKQGVTLPIENALDVYIAVLGEGANAKALELVQALRQQGFKAERDYLNRKLKAQFKSADVFVAKTLITLGESEVESGQVTVKNNQTREEVQVSLETISQNFSEIFEKLGFYTQ</sequence>
<evidence type="ECO:0000255" key="1">
    <source>
        <dbReference type="HAMAP-Rule" id="MF_00127"/>
    </source>
</evidence>
<accession>B1I9T7</accession>
<name>SYH_STRPI</name>